<gene>
    <name type="primary">EIFSV1</name>
</gene>
<comment type="function">
    <text evidence="1">Translation factor that promotes translation elongation and termination, particularly upon ribosome stalling at specific amino acid sequence contexts (By similarity). Binds between the exit (E) and peptidyl (P) site of the ribosome and promotes rescue of stalled ribosome: specifically required for efficient translation of polyproline-containing peptides as well as other motifs that stall the ribosome (By similarity). Acts as a ribosome quality control (RQC) cofactor by joining the RQC complex to facilitate peptidyl transfer during CAT tailing step (By similarity).</text>
</comment>
<comment type="PTM">
    <text evidence="2">Lys-52 undergoes hypusination, a unique post-translational modification that consists in the addition of a butylamino group from spermidine to lysine side chain, leading to the formation of the unusual amino acid hypusine. eIF-5As are the only known proteins to undergo this modification, which is essential for their function.</text>
</comment>
<comment type="similarity">
    <text evidence="4">Belongs to the eIF-5A family.</text>
</comment>
<accession>Q9SC12</accession>
<evidence type="ECO:0000250" key="1">
    <source>
        <dbReference type="UniProtKB" id="P23301"/>
    </source>
</evidence>
<evidence type="ECO:0000250" key="2">
    <source>
        <dbReference type="UniProtKB" id="Q9XI91"/>
    </source>
</evidence>
<evidence type="ECO:0000256" key="3">
    <source>
        <dbReference type="SAM" id="MobiDB-lite"/>
    </source>
</evidence>
<evidence type="ECO:0000305" key="4"/>
<reference key="1">
    <citation type="journal article" date="1999" name="Proc. Natl. Acad. Sci. U.S.A.">
        <title>Homospermidine synthase, the first pathway-specific enzyme of pyrrolizidine alkaloid biosynthesis, evolved from deoxyhypusine synthase.</title>
        <authorList>
            <person name="Ober D."/>
            <person name="Hartmann T."/>
        </authorList>
    </citation>
    <scope>NUCLEOTIDE SEQUENCE [MRNA]</scope>
</reference>
<dbReference type="EMBL" id="AJ238624">
    <property type="protein sequence ID" value="CAB65463.1"/>
    <property type="molecule type" value="mRNA"/>
</dbReference>
<dbReference type="SMR" id="Q9SC12"/>
<dbReference type="GO" id="GO:0043022">
    <property type="term" value="F:ribosome binding"/>
    <property type="evidence" value="ECO:0007669"/>
    <property type="project" value="InterPro"/>
</dbReference>
<dbReference type="GO" id="GO:0003723">
    <property type="term" value="F:RNA binding"/>
    <property type="evidence" value="ECO:0007669"/>
    <property type="project" value="InterPro"/>
</dbReference>
<dbReference type="GO" id="GO:0003746">
    <property type="term" value="F:translation elongation factor activity"/>
    <property type="evidence" value="ECO:0007669"/>
    <property type="project" value="InterPro"/>
</dbReference>
<dbReference type="GO" id="GO:0003743">
    <property type="term" value="F:translation initiation factor activity"/>
    <property type="evidence" value="ECO:0007669"/>
    <property type="project" value="UniProtKB-KW"/>
</dbReference>
<dbReference type="GO" id="GO:0045901">
    <property type="term" value="P:positive regulation of translational elongation"/>
    <property type="evidence" value="ECO:0007669"/>
    <property type="project" value="InterPro"/>
</dbReference>
<dbReference type="GO" id="GO:0045905">
    <property type="term" value="P:positive regulation of translational termination"/>
    <property type="evidence" value="ECO:0007669"/>
    <property type="project" value="InterPro"/>
</dbReference>
<dbReference type="CDD" id="cd04468">
    <property type="entry name" value="S1_eIF5A"/>
    <property type="match status" value="1"/>
</dbReference>
<dbReference type="FunFam" id="2.30.30.30:FF:000012">
    <property type="entry name" value="Eukaryotic translation initiation factor 5A"/>
    <property type="match status" value="1"/>
</dbReference>
<dbReference type="FunFam" id="2.40.50.140:FF:000034">
    <property type="entry name" value="Eukaryotic translation initiation factor 5A"/>
    <property type="match status" value="1"/>
</dbReference>
<dbReference type="Gene3D" id="2.30.30.30">
    <property type="match status" value="1"/>
</dbReference>
<dbReference type="Gene3D" id="2.40.50.140">
    <property type="entry name" value="Nucleic acid-binding proteins"/>
    <property type="match status" value="1"/>
</dbReference>
<dbReference type="InterPro" id="IPR001884">
    <property type="entry name" value="IF5A-like"/>
</dbReference>
<dbReference type="InterPro" id="IPR048670">
    <property type="entry name" value="IF5A-like_N"/>
</dbReference>
<dbReference type="InterPro" id="IPR012340">
    <property type="entry name" value="NA-bd_OB-fold"/>
</dbReference>
<dbReference type="InterPro" id="IPR014722">
    <property type="entry name" value="Rib_uL2_dom2"/>
</dbReference>
<dbReference type="InterPro" id="IPR019769">
    <property type="entry name" value="Trans_elong_IF5A_hypusine_site"/>
</dbReference>
<dbReference type="InterPro" id="IPR020189">
    <property type="entry name" value="Transl_elong_IF5A_C"/>
</dbReference>
<dbReference type="InterPro" id="IPR008991">
    <property type="entry name" value="Translation_prot_SH3-like_sf"/>
</dbReference>
<dbReference type="NCBIfam" id="TIGR00037">
    <property type="entry name" value="eIF_5A"/>
    <property type="match status" value="1"/>
</dbReference>
<dbReference type="PANTHER" id="PTHR11673">
    <property type="entry name" value="TRANSLATION INITIATION FACTOR 5A FAMILY MEMBER"/>
    <property type="match status" value="1"/>
</dbReference>
<dbReference type="Pfam" id="PF01287">
    <property type="entry name" value="eIF-5a"/>
    <property type="match status" value="1"/>
</dbReference>
<dbReference type="Pfam" id="PF21485">
    <property type="entry name" value="IF5A-like_N"/>
    <property type="match status" value="1"/>
</dbReference>
<dbReference type="PIRSF" id="PIRSF003025">
    <property type="entry name" value="eIF5A"/>
    <property type="match status" value="1"/>
</dbReference>
<dbReference type="SMART" id="SM01376">
    <property type="entry name" value="eIF-5a"/>
    <property type="match status" value="1"/>
</dbReference>
<dbReference type="SUPFAM" id="SSF50249">
    <property type="entry name" value="Nucleic acid-binding proteins"/>
    <property type="match status" value="1"/>
</dbReference>
<dbReference type="SUPFAM" id="SSF50104">
    <property type="entry name" value="Translation proteins SH3-like domain"/>
    <property type="match status" value="1"/>
</dbReference>
<dbReference type="PROSITE" id="PS00302">
    <property type="entry name" value="IF5A_HYPUSINE"/>
    <property type="match status" value="1"/>
</dbReference>
<feature type="chain" id="PRO_0000142477" description="Eukaryotic translation initiation factor 5A">
    <location>
        <begin position="1"/>
        <end position="159"/>
    </location>
</feature>
<feature type="region of interest" description="Disordered" evidence="3">
    <location>
        <begin position="1"/>
        <end position="23"/>
    </location>
</feature>
<feature type="compositionally biased region" description="Basic and acidic residues" evidence="3">
    <location>
        <begin position="1"/>
        <end position="12"/>
    </location>
</feature>
<feature type="modified residue" description="Hypusine" evidence="2">
    <location>
        <position position="52"/>
    </location>
</feature>
<keyword id="KW-0385">Hypusine</keyword>
<keyword id="KW-0396">Initiation factor</keyword>
<keyword id="KW-0648">Protein biosynthesis</keyword>
<proteinExistence type="evidence at transcript level"/>
<protein>
    <recommendedName>
        <fullName>Eukaryotic translation initiation factor 5A</fullName>
        <shortName>eIF-5A</shortName>
    </recommendedName>
</protein>
<name>IF5A_SENVE</name>
<organism>
    <name type="scientific">Senecio vernalis</name>
    <name type="common">Spring groundsel</name>
    <dbReference type="NCBI Taxonomy" id="93496"/>
    <lineage>
        <taxon>Eukaryota</taxon>
        <taxon>Viridiplantae</taxon>
        <taxon>Streptophyta</taxon>
        <taxon>Embryophyta</taxon>
        <taxon>Tracheophyta</taxon>
        <taxon>Spermatophyta</taxon>
        <taxon>Magnoliopsida</taxon>
        <taxon>eudicotyledons</taxon>
        <taxon>Gunneridae</taxon>
        <taxon>Pentapetalae</taxon>
        <taxon>asterids</taxon>
        <taxon>campanulids</taxon>
        <taxon>Asterales</taxon>
        <taxon>Asteraceae</taxon>
        <taxon>Asteroideae</taxon>
        <taxon>Senecioneae</taxon>
        <taxon>Senecioninae</taxon>
        <taxon>Senecio</taxon>
    </lineage>
</organism>
<sequence>MSDEEHQFESKADAGASKTYPQQAGTIRKGGHIVIKNRACKVVEVSTSKTGKHGHAKCHFVAIDIFNGKKLEDIVPSSHNCDVPHVNRTDYQLIDISEDGFVSLLTENGNTKDDLKLPTDDALLTQIKDGFGEGKDLVVSVMSAMGEEQICALKDIGPK</sequence>